<evidence type="ECO:0000255" key="1">
    <source>
        <dbReference type="HAMAP-Rule" id="MF_00031"/>
    </source>
</evidence>
<proteinExistence type="inferred from homology"/>
<comment type="function">
    <text evidence="1">The RuvA-RuvB-RuvC complex processes Holliday junction (HJ) DNA during genetic recombination and DNA repair, while the RuvA-RuvB complex plays an important role in the rescue of blocked DNA replication forks via replication fork reversal (RFR). RuvA specifically binds to HJ cruciform DNA, conferring on it an open structure. The RuvB hexamer acts as an ATP-dependent pump, pulling dsDNA into and through the RuvAB complex. HJ branch migration allows RuvC to scan DNA until it finds its consensus sequence, where it cleaves and resolves the cruciform DNA.</text>
</comment>
<comment type="subunit">
    <text evidence="1">Homotetramer. Forms an RuvA(8)-RuvB(12)-Holliday junction (HJ) complex. HJ DNA is sandwiched between 2 RuvA tetramers; dsDNA enters through RuvA and exits via RuvB. An RuvB hexamer assembles on each DNA strand where it exits the tetramer. Each RuvB hexamer is contacted by two RuvA subunits (via domain III) on 2 adjacent RuvB subunits; this complex drives branch migration. In the full resolvosome a probable DNA-RuvA(4)-RuvB(12)-RuvC(2) complex forms which resolves the HJ.</text>
</comment>
<comment type="subcellular location">
    <subcellularLocation>
        <location evidence="1">Cytoplasm</location>
    </subcellularLocation>
</comment>
<comment type="domain">
    <text evidence="1">Has three domains with a flexible linker between the domains II and III and assumes an 'L' shape. Domain III is highly mobile and contacts RuvB.</text>
</comment>
<comment type="similarity">
    <text evidence="1">Belongs to the RuvA family.</text>
</comment>
<feature type="chain" id="PRO_1000074426" description="Holliday junction branch migration complex subunit RuvA">
    <location>
        <begin position="1"/>
        <end position="195"/>
    </location>
</feature>
<feature type="region of interest" description="Domain I" evidence="1">
    <location>
        <begin position="1"/>
        <end position="63"/>
    </location>
</feature>
<feature type="region of interest" description="Domain II" evidence="1">
    <location>
        <begin position="64"/>
        <end position="138"/>
    </location>
</feature>
<feature type="region of interest" description="Flexible linker" evidence="1">
    <location>
        <begin position="138"/>
        <end position="142"/>
    </location>
</feature>
<feature type="region of interest" description="Domain III" evidence="1">
    <location>
        <begin position="143"/>
        <end position="195"/>
    </location>
</feature>
<gene>
    <name evidence="1" type="primary">ruvA</name>
    <name type="ordered locus">Mflv_3825</name>
</gene>
<accession>A4TBQ6</accession>
<protein>
    <recommendedName>
        <fullName evidence="1">Holliday junction branch migration complex subunit RuvA</fullName>
    </recommendedName>
</protein>
<sequence length="195" mass="19958">MIASVRGEVLDIALDHVVIEAAGVGYKVMATPATLATLRRGSEARLITAMIVREDSQTLYGFADSDARDLFLTLLGVSGIGPSIALGALAMYDGPTLRQAIGDGDLTALTRIPKVGKKTAELLALTLRDKVGSSTSSGVAAAGGHGIRGPVVEALVGLGFAVKQAEEATDKVLANDPEATTSSALRAALSMLGKK</sequence>
<keyword id="KW-0963">Cytoplasm</keyword>
<keyword id="KW-0227">DNA damage</keyword>
<keyword id="KW-0233">DNA recombination</keyword>
<keyword id="KW-0234">DNA repair</keyword>
<keyword id="KW-0238">DNA-binding</keyword>
<reference key="1">
    <citation type="submission" date="2007-04" db="EMBL/GenBank/DDBJ databases">
        <title>Complete sequence of chromosome of Mycobacterium gilvum PYR-GCK.</title>
        <authorList>
            <consortium name="US DOE Joint Genome Institute"/>
            <person name="Copeland A."/>
            <person name="Lucas S."/>
            <person name="Lapidus A."/>
            <person name="Barry K."/>
            <person name="Detter J.C."/>
            <person name="Glavina del Rio T."/>
            <person name="Hammon N."/>
            <person name="Israni S."/>
            <person name="Dalin E."/>
            <person name="Tice H."/>
            <person name="Pitluck S."/>
            <person name="Chain P."/>
            <person name="Malfatti S."/>
            <person name="Shin M."/>
            <person name="Vergez L."/>
            <person name="Schmutz J."/>
            <person name="Larimer F."/>
            <person name="Land M."/>
            <person name="Hauser L."/>
            <person name="Kyrpides N."/>
            <person name="Mikhailova N."/>
            <person name="Miller C."/>
            <person name="Richardson P."/>
        </authorList>
    </citation>
    <scope>NUCLEOTIDE SEQUENCE [LARGE SCALE GENOMIC DNA]</scope>
    <source>
        <strain>PYR-GCK</strain>
    </source>
</reference>
<name>RUVA_MYCGI</name>
<organism>
    <name type="scientific">Mycolicibacterium gilvum (strain PYR-GCK)</name>
    <name type="common">Mycobacterium gilvum (strain PYR-GCK)</name>
    <dbReference type="NCBI Taxonomy" id="350054"/>
    <lineage>
        <taxon>Bacteria</taxon>
        <taxon>Bacillati</taxon>
        <taxon>Actinomycetota</taxon>
        <taxon>Actinomycetes</taxon>
        <taxon>Mycobacteriales</taxon>
        <taxon>Mycobacteriaceae</taxon>
        <taxon>Mycolicibacterium</taxon>
    </lineage>
</organism>
<dbReference type="EMBL" id="CP000656">
    <property type="protein sequence ID" value="ABP46297.1"/>
    <property type="molecule type" value="Genomic_DNA"/>
</dbReference>
<dbReference type="SMR" id="A4TBQ6"/>
<dbReference type="STRING" id="350054.Mflv_3825"/>
<dbReference type="KEGG" id="mgi:Mflv_3825"/>
<dbReference type="eggNOG" id="COG0632">
    <property type="taxonomic scope" value="Bacteria"/>
</dbReference>
<dbReference type="HOGENOM" id="CLU_087936_2_1_11"/>
<dbReference type="OrthoDB" id="5293449at2"/>
<dbReference type="GO" id="GO:0005737">
    <property type="term" value="C:cytoplasm"/>
    <property type="evidence" value="ECO:0007669"/>
    <property type="project" value="UniProtKB-SubCell"/>
</dbReference>
<dbReference type="GO" id="GO:0009379">
    <property type="term" value="C:Holliday junction helicase complex"/>
    <property type="evidence" value="ECO:0007669"/>
    <property type="project" value="InterPro"/>
</dbReference>
<dbReference type="GO" id="GO:0048476">
    <property type="term" value="C:Holliday junction resolvase complex"/>
    <property type="evidence" value="ECO:0007669"/>
    <property type="project" value="UniProtKB-UniRule"/>
</dbReference>
<dbReference type="GO" id="GO:0005524">
    <property type="term" value="F:ATP binding"/>
    <property type="evidence" value="ECO:0007669"/>
    <property type="project" value="InterPro"/>
</dbReference>
<dbReference type="GO" id="GO:0000400">
    <property type="term" value="F:four-way junction DNA binding"/>
    <property type="evidence" value="ECO:0007669"/>
    <property type="project" value="UniProtKB-UniRule"/>
</dbReference>
<dbReference type="GO" id="GO:0009378">
    <property type="term" value="F:four-way junction helicase activity"/>
    <property type="evidence" value="ECO:0007669"/>
    <property type="project" value="InterPro"/>
</dbReference>
<dbReference type="GO" id="GO:0006310">
    <property type="term" value="P:DNA recombination"/>
    <property type="evidence" value="ECO:0007669"/>
    <property type="project" value="UniProtKB-UniRule"/>
</dbReference>
<dbReference type="GO" id="GO:0006281">
    <property type="term" value="P:DNA repair"/>
    <property type="evidence" value="ECO:0007669"/>
    <property type="project" value="UniProtKB-UniRule"/>
</dbReference>
<dbReference type="CDD" id="cd14332">
    <property type="entry name" value="UBA_RuvA_C"/>
    <property type="match status" value="1"/>
</dbReference>
<dbReference type="FunFam" id="2.40.50.140:FF:000083">
    <property type="entry name" value="Holliday junction ATP-dependent DNA helicase RuvA"/>
    <property type="match status" value="1"/>
</dbReference>
<dbReference type="Gene3D" id="1.10.150.20">
    <property type="entry name" value="5' to 3' exonuclease, C-terminal subdomain"/>
    <property type="match status" value="1"/>
</dbReference>
<dbReference type="Gene3D" id="1.10.8.10">
    <property type="entry name" value="DNA helicase RuvA subunit, C-terminal domain"/>
    <property type="match status" value="1"/>
</dbReference>
<dbReference type="Gene3D" id="2.40.50.140">
    <property type="entry name" value="Nucleic acid-binding proteins"/>
    <property type="match status" value="1"/>
</dbReference>
<dbReference type="HAMAP" id="MF_00031">
    <property type="entry name" value="DNA_HJ_migration_RuvA"/>
    <property type="match status" value="1"/>
</dbReference>
<dbReference type="InterPro" id="IPR013849">
    <property type="entry name" value="DNA_helicase_Holl-junc_RuvA_I"/>
</dbReference>
<dbReference type="InterPro" id="IPR012340">
    <property type="entry name" value="NA-bd_OB-fold"/>
</dbReference>
<dbReference type="InterPro" id="IPR000085">
    <property type="entry name" value="RuvA"/>
</dbReference>
<dbReference type="InterPro" id="IPR010994">
    <property type="entry name" value="RuvA_2-like"/>
</dbReference>
<dbReference type="InterPro" id="IPR011114">
    <property type="entry name" value="RuvA_C"/>
</dbReference>
<dbReference type="InterPro" id="IPR036267">
    <property type="entry name" value="RuvA_C_sf"/>
</dbReference>
<dbReference type="NCBIfam" id="TIGR00084">
    <property type="entry name" value="ruvA"/>
    <property type="match status" value="1"/>
</dbReference>
<dbReference type="Pfam" id="PF14520">
    <property type="entry name" value="HHH_5"/>
    <property type="match status" value="1"/>
</dbReference>
<dbReference type="Pfam" id="PF07499">
    <property type="entry name" value="RuvA_C"/>
    <property type="match status" value="1"/>
</dbReference>
<dbReference type="Pfam" id="PF01330">
    <property type="entry name" value="RuvA_N"/>
    <property type="match status" value="1"/>
</dbReference>
<dbReference type="SUPFAM" id="SSF46929">
    <property type="entry name" value="DNA helicase RuvA subunit, C-terminal domain"/>
    <property type="match status" value="1"/>
</dbReference>
<dbReference type="SUPFAM" id="SSF50249">
    <property type="entry name" value="Nucleic acid-binding proteins"/>
    <property type="match status" value="1"/>
</dbReference>
<dbReference type="SUPFAM" id="SSF47781">
    <property type="entry name" value="RuvA domain 2-like"/>
    <property type="match status" value="1"/>
</dbReference>